<organism>
    <name type="scientific">Serratia proteamaculans (strain 568)</name>
    <dbReference type="NCBI Taxonomy" id="399741"/>
    <lineage>
        <taxon>Bacteria</taxon>
        <taxon>Pseudomonadati</taxon>
        <taxon>Pseudomonadota</taxon>
        <taxon>Gammaproteobacteria</taxon>
        <taxon>Enterobacterales</taxon>
        <taxon>Yersiniaceae</taxon>
        <taxon>Serratia</taxon>
    </lineage>
</organism>
<keyword id="KW-0997">Cell inner membrane</keyword>
<keyword id="KW-1003">Cell membrane</keyword>
<keyword id="KW-0472">Membrane</keyword>
<keyword id="KW-0812">Transmembrane</keyword>
<keyword id="KW-1133">Transmembrane helix</keyword>
<proteinExistence type="inferred from homology"/>
<gene>
    <name type="ordered locus">Spro_3315</name>
</gene>
<accession>A8GH23</accession>
<reference key="1">
    <citation type="submission" date="2007-09" db="EMBL/GenBank/DDBJ databases">
        <title>Complete sequence of chromosome of Serratia proteamaculans 568.</title>
        <authorList>
            <consortium name="US DOE Joint Genome Institute"/>
            <person name="Copeland A."/>
            <person name="Lucas S."/>
            <person name="Lapidus A."/>
            <person name="Barry K."/>
            <person name="Glavina del Rio T."/>
            <person name="Dalin E."/>
            <person name="Tice H."/>
            <person name="Pitluck S."/>
            <person name="Chain P."/>
            <person name="Malfatti S."/>
            <person name="Shin M."/>
            <person name="Vergez L."/>
            <person name="Schmutz J."/>
            <person name="Larimer F."/>
            <person name="Land M."/>
            <person name="Hauser L."/>
            <person name="Kyrpides N."/>
            <person name="Kim E."/>
            <person name="Taghavi S."/>
            <person name="Newman L."/>
            <person name="Vangronsveld J."/>
            <person name="van der Lelie D."/>
            <person name="Richardson P."/>
        </authorList>
    </citation>
    <scope>NUCLEOTIDE SEQUENCE [LARGE SCALE GENOMIC DNA]</scope>
    <source>
        <strain>568</strain>
    </source>
</reference>
<feature type="chain" id="PRO_1000064978" description="UPF0208 membrane protein Spro_3315">
    <location>
        <begin position="1"/>
        <end position="151"/>
    </location>
</feature>
<feature type="transmembrane region" description="Helical" evidence="1">
    <location>
        <begin position="46"/>
        <end position="64"/>
    </location>
</feature>
<feature type="transmembrane region" description="Helical" evidence="1">
    <location>
        <begin position="70"/>
        <end position="90"/>
    </location>
</feature>
<protein>
    <recommendedName>
        <fullName evidence="1">UPF0208 membrane protein Spro_3315</fullName>
    </recommendedName>
</protein>
<evidence type="ECO:0000255" key="1">
    <source>
        <dbReference type="HAMAP-Rule" id="MF_01101"/>
    </source>
</evidence>
<name>Y3315_SERP5</name>
<dbReference type="EMBL" id="CP000826">
    <property type="protein sequence ID" value="ABV42413.1"/>
    <property type="molecule type" value="Genomic_DNA"/>
</dbReference>
<dbReference type="STRING" id="399741.Spro_3315"/>
<dbReference type="KEGG" id="spe:Spro_3315"/>
<dbReference type="eggNOG" id="COG3092">
    <property type="taxonomic scope" value="Bacteria"/>
</dbReference>
<dbReference type="HOGENOM" id="CLU_128746_0_0_6"/>
<dbReference type="OrthoDB" id="7066670at2"/>
<dbReference type="GO" id="GO:0005886">
    <property type="term" value="C:plasma membrane"/>
    <property type="evidence" value="ECO:0007669"/>
    <property type="project" value="UniProtKB-SubCell"/>
</dbReference>
<dbReference type="HAMAP" id="MF_01101">
    <property type="entry name" value="UPF0208"/>
    <property type="match status" value="1"/>
</dbReference>
<dbReference type="InterPro" id="IPR007334">
    <property type="entry name" value="UPF0208"/>
</dbReference>
<dbReference type="NCBIfam" id="NF002493">
    <property type="entry name" value="PRK01816.1"/>
    <property type="match status" value="1"/>
</dbReference>
<dbReference type="Pfam" id="PF04217">
    <property type="entry name" value="DUF412"/>
    <property type="match status" value="1"/>
</dbReference>
<sequence>MTSKPSGSVSWFQVFQRGQHYMKTWPSDKRLAPVFPENRVASATRFAVRFMPPLAVFTLTWQIALGGQLGPAIATALFACSMPMQGLWWLGRRSVTPLPPTLLQWFHEVRNKLAEAGQAVAPVEGTPTYQALADLLKRAFKQLDKTFLDDL</sequence>
<comment type="subcellular location">
    <subcellularLocation>
        <location evidence="1">Cell inner membrane</location>
        <topology evidence="1">Multi-pass membrane protein</topology>
    </subcellularLocation>
</comment>
<comment type="similarity">
    <text evidence="1">Belongs to the UPF0208 family.</text>
</comment>